<comment type="function">
    <text evidence="1">Nucleotidase with a broad substrate specificity as it can dephosphorylate various ribo- and deoxyribonucleoside 5'-monophosphates and ribonucleoside 3'-monophosphates with highest affinity to 3'-AMP. Also hydrolyzes polyphosphate (exopolyphosphatase activity) with the preference for short-chain-length substrates (P20-25). Might be involved in the regulation of dNTP and NTP pools, and in the turnover of 3'-mononucleotides produced by numerous intracellular RNases (T1, T2, and F) during the degradation of various RNAs.</text>
</comment>
<comment type="catalytic activity">
    <reaction evidence="1">
        <text>a ribonucleoside 5'-phosphate + H2O = a ribonucleoside + phosphate</text>
        <dbReference type="Rhea" id="RHEA:12484"/>
        <dbReference type="ChEBI" id="CHEBI:15377"/>
        <dbReference type="ChEBI" id="CHEBI:18254"/>
        <dbReference type="ChEBI" id="CHEBI:43474"/>
        <dbReference type="ChEBI" id="CHEBI:58043"/>
        <dbReference type="EC" id="3.1.3.5"/>
    </reaction>
</comment>
<comment type="catalytic activity">
    <reaction evidence="1">
        <text>a ribonucleoside 3'-phosphate + H2O = a ribonucleoside + phosphate</text>
        <dbReference type="Rhea" id="RHEA:10144"/>
        <dbReference type="ChEBI" id="CHEBI:13197"/>
        <dbReference type="ChEBI" id="CHEBI:15377"/>
        <dbReference type="ChEBI" id="CHEBI:18254"/>
        <dbReference type="ChEBI" id="CHEBI:43474"/>
        <dbReference type="EC" id="3.1.3.6"/>
    </reaction>
</comment>
<comment type="catalytic activity">
    <reaction evidence="1">
        <text>[phosphate](n) + H2O = [phosphate](n-1) + phosphate + H(+)</text>
        <dbReference type="Rhea" id="RHEA:21528"/>
        <dbReference type="Rhea" id="RHEA-COMP:9859"/>
        <dbReference type="Rhea" id="RHEA-COMP:14279"/>
        <dbReference type="ChEBI" id="CHEBI:15377"/>
        <dbReference type="ChEBI" id="CHEBI:15378"/>
        <dbReference type="ChEBI" id="CHEBI:16838"/>
        <dbReference type="ChEBI" id="CHEBI:43474"/>
        <dbReference type="EC" id="3.6.1.11"/>
    </reaction>
</comment>
<comment type="cofactor">
    <cofactor evidence="1">
        <name>a divalent metal cation</name>
        <dbReference type="ChEBI" id="CHEBI:60240"/>
    </cofactor>
    <text evidence="1">Binds 1 divalent metal cation per subunit.</text>
</comment>
<comment type="subcellular location">
    <subcellularLocation>
        <location evidence="1">Cytoplasm</location>
    </subcellularLocation>
</comment>
<comment type="similarity">
    <text evidence="1">Belongs to the SurE nucleotidase family.</text>
</comment>
<accession>A7FLX5</accession>
<name>SURE_YERP3</name>
<protein>
    <recommendedName>
        <fullName evidence="1">5'/3'-nucleotidase SurE</fullName>
        <ecNumber evidence="1">3.1.3.5</ecNumber>
        <ecNumber evidence="1">3.1.3.6</ecNumber>
    </recommendedName>
    <alternativeName>
        <fullName evidence="1">Exopolyphosphatase</fullName>
        <ecNumber evidence="1">3.6.1.11</ecNumber>
    </alternativeName>
    <alternativeName>
        <fullName evidence="1">Nucleoside monophosphate phosphohydrolase</fullName>
    </alternativeName>
</protein>
<proteinExistence type="inferred from homology"/>
<feature type="chain" id="PRO_1000057415" description="5'/3'-nucleotidase SurE">
    <location>
        <begin position="1"/>
        <end position="254"/>
    </location>
</feature>
<feature type="binding site" evidence="1">
    <location>
        <position position="9"/>
    </location>
    <ligand>
        <name>a divalent metal cation</name>
        <dbReference type="ChEBI" id="CHEBI:60240"/>
    </ligand>
</feature>
<feature type="binding site" evidence="1">
    <location>
        <position position="10"/>
    </location>
    <ligand>
        <name>a divalent metal cation</name>
        <dbReference type="ChEBI" id="CHEBI:60240"/>
    </ligand>
</feature>
<feature type="binding site" evidence="1">
    <location>
        <position position="40"/>
    </location>
    <ligand>
        <name>a divalent metal cation</name>
        <dbReference type="ChEBI" id="CHEBI:60240"/>
    </ligand>
</feature>
<feature type="binding site" evidence="1">
    <location>
        <position position="93"/>
    </location>
    <ligand>
        <name>a divalent metal cation</name>
        <dbReference type="ChEBI" id="CHEBI:60240"/>
    </ligand>
</feature>
<keyword id="KW-0963">Cytoplasm</keyword>
<keyword id="KW-0378">Hydrolase</keyword>
<keyword id="KW-0479">Metal-binding</keyword>
<keyword id="KW-0547">Nucleotide-binding</keyword>
<evidence type="ECO:0000255" key="1">
    <source>
        <dbReference type="HAMAP-Rule" id="MF_00060"/>
    </source>
</evidence>
<reference key="1">
    <citation type="journal article" date="2007" name="PLoS Genet.">
        <title>The complete genome sequence of Yersinia pseudotuberculosis IP31758, the causative agent of Far East scarlet-like fever.</title>
        <authorList>
            <person name="Eppinger M."/>
            <person name="Rosovitz M.J."/>
            <person name="Fricke W.F."/>
            <person name="Rasko D.A."/>
            <person name="Kokorina G."/>
            <person name="Fayolle C."/>
            <person name="Lindler L.E."/>
            <person name="Carniel E."/>
            <person name="Ravel J."/>
        </authorList>
    </citation>
    <scope>NUCLEOTIDE SEQUENCE [LARGE SCALE GENOMIC DNA]</scope>
    <source>
        <strain>IP 31758</strain>
    </source>
</reference>
<gene>
    <name evidence="1" type="primary">surE</name>
    <name type="ordered locus">YpsIP31758_3296</name>
</gene>
<dbReference type="EC" id="3.1.3.5" evidence="1"/>
<dbReference type="EC" id="3.1.3.6" evidence="1"/>
<dbReference type="EC" id="3.6.1.11" evidence="1"/>
<dbReference type="EMBL" id="CP000720">
    <property type="protein sequence ID" value="ABS47039.1"/>
    <property type="molecule type" value="Genomic_DNA"/>
</dbReference>
<dbReference type="RefSeq" id="WP_011191778.1">
    <property type="nucleotide sequence ID" value="NC_009708.1"/>
</dbReference>
<dbReference type="SMR" id="A7FLX5"/>
<dbReference type="GeneID" id="49787219"/>
<dbReference type="KEGG" id="ypi:YpsIP31758_3296"/>
<dbReference type="HOGENOM" id="CLU_045192_1_2_6"/>
<dbReference type="Proteomes" id="UP000002412">
    <property type="component" value="Chromosome"/>
</dbReference>
<dbReference type="GO" id="GO:0005737">
    <property type="term" value="C:cytoplasm"/>
    <property type="evidence" value="ECO:0007669"/>
    <property type="project" value="UniProtKB-SubCell"/>
</dbReference>
<dbReference type="GO" id="GO:0008254">
    <property type="term" value="F:3'-nucleotidase activity"/>
    <property type="evidence" value="ECO:0007669"/>
    <property type="project" value="UniProtKB-UniRule"/>
</dbReference>
<dbReference type="GO" id="GO:0008253">
    <property type="term" value="F:5'-nucleotidase activity"/>
    <property type="evidence" value="ECO:0007669"/>
    <property type="project" value="UniProtKB-UniRule"/>
</dbReference>
<dbReference type="GO" id="GO:0004309">
    <property type="term" value="F:exopolyphosphatase activity"/>
    <property type="evidence" value="ECO:0007669"/>
    <property type="project" value="UniProtKB-UniRule"/>
</dbReference>
<dbReference type="GO" id="GO:0046872">
    <property type="term" value="F:metal ion binding"/>
    <property type="evidence" value="ECO:0007669"/>
    <property type="project" value="UniProtKB-UniRule"/>
</dbReference>
<dbReference type="GO" id="GO:0000166">
    <property type="term" value="F:nucleotide binding"/>
    <property type="evidence" value="ECO:0007669"/>
    <property type="project" value="UniProtKB-KW"/>
</dbReference>
<dbReference type="FunFam" id="3.40.1210.10:FF:000001">
    <property type="entry name" value="5'/3'-nucleotidase SurE"/>
    <property type="match status" value="1"/>
</dbReference>
<dbReference type="Gene3D" id="3.40.1210.10">
    <property type="entry name" value="Survival protein SurE-like phosphatase/nucleotidase"/>
    <property type="match status" value="1"/>
</dbReference>
<dbReference type="HAMAP" id="MF_00060">
    <property type="entry name" value="SurE"/>
    <property type="match status" value="1"/>
</dbReference>
<dbReference type="InterPro" id="IPR030048">
    <property type="entry name" value="SurE"/>
</dbReference>
<dbReference type="InterPro" id="IPR002828">
    <property type="entry name" value="SurE-like_Pase/nucleotidase"/>
</dbReference>
<dbReference type="InterPro" id="IPR036523">
    <property type="entry name" value="SurE-like_sf"/>
</dbReference>
<dbReference type="NCBIfam" id="NF001488">
    <property type="entry name" value="PRK00346.1-1"/>
    <property type="match status" value="1"/>
</dbReference>
<dbReference type="NCBIfam" id="NF001489">
    <property type="entry name" value="PRK00346.1-3"/>
    <property type="match status" value="1"/>
</dbReference>
<dbReference type="NCBIfam" id="NF001490">
    <property type="entry name" value="PRK00346.1-4"/>
    <property type="match status" value="1"/>
</dbReference>
<dbReference type="NCBIfam" id="TIGR00087">
    <property type="entry name" value="surE"/>
    <property type="match status" value="1"/>
</dbReference>
<dbReference type="PANTHER" id="PTHR30457">
    <property type="entry name" value="5'-NUCLEOTIDASE SURE"/>
    <property type="match status" value="1"/>
</dbReference>
<dbReference type="PANTHER" id="PTHR30457:SF12">
    <property type="entry name" value="5'_3'-NUCLEOTIDASE SURE"/>
    <property type="match status" value="1"/>
</dbReference>
<dbReference type="Pfam" id="PF01975">
    <property type="entry name" value="SurE"/>
    <property type="match status" value="1"/>
</dbReference>
<dbReference type="SUPFAM" id="SSF64167">
    <property type="entry name" value="SurE-like"/>
    <property type="match status" value="1"/>
</dbReference>
<sequence>MIRILLSNDDGISAPGIQTLASALREFAQVQIVAPDRNRSGASNALTLDSALRITTLSNGDIAVQQGTPTDCVYLGVNALMRPRPDIVVSGINAGPNLGDDVIYSGTVAAAMEGRHLGYPALAVSLNGHQHYDTAAAVTCRLLRALQRKPLRTGKILNINVPDLPLSEIKGIRVTRCGSRHPAEQVFCQQDPRGQDLYWIGPPGEKYDAGPDTDFAAVEQGYVSITPLQVDLTAYTAQEVVESWLANTEVDGEW</sequence>
<organism>
    <name type="scientific">Yersinia pseudotuberculosis serotype O:1b (strain IP 31758)</name>
    <dbReference type="NCBI Taxonomy" id="349747"/>
    <lineage>
        <taxon>Bacteria</taxon>
        <taxon>Pseudomonadati</taxon>
        <taxon>Pseudomonadota</taxon>
        <taxon>Gammaproteobacteria</taxon>
        <taxon>Enterobacterales</taxon>
        <taxon>Yersiniaceae</taxon>
        <taxon>Yersinia</taxon>
    </lineage>
</organism>